<feature type="chain" id="PRO_0000152794" description="Phosphomethylpyrimidine synthase">
    <location>
        <begin position="1"/>
        <end position="556"/>
    </location>
</feature>
<feature type="binding site" evidence="1">
    <location>
        <position position="191"/>
    </location>
    <ligand>
        <name>substrate</name>
    </ligand>
</feature>
<feature type="binding site" evidence="1">
    <location>
        <position position="220"/>
    </location>
    <ligand>
        <name>substrate</name>
    </ligand>
</feature>
<feature type="binding site" evidence="1">
    <location>
        <position position="249"/>
    </location>
    <ligand>
        <name>substrate</name>
    </ligand>
</feature>
<feature type="binding site" evidence="1">
    <location>
        <position position="285"/>
    </location>
    <ligand>
        <name>substrate</name>
    </ligand>
</feature>
<feature type="binding site" evidence="1">
    <location>
        <begin position="305"/>
        <end position="307"/>
    </location>
    <ligand>
        <name>substrate</name>
    </ligand>
</feature>
<feature type="binding site" evidence="1">
    <location>
        <begin position="346"/>
        <end position="349"/>
    </location>
    <ligand>
        <name>substrate</name>
    </ligand>
</feature>
<feature type="binding site" evidence="1">
    <location>
        <position position="385"/>
    </location>
    <ligand>
        <name>substrate</name>
    </ligand>
</feature>
<feature type="binding site" evidence="1">
    <location>
        <position position="389"/>
    </location>
    <ligand>
        <name>Zn(2+)</name>
        <dbReference type="ChEBI" id="CHEBI:29105"/>
    </ligand>
</feature>
<feature type="binding site" evidence="1">
    <location>
        <position position="412"/>
    </location>
    <ligand>
        <name>substrate</name>
    </ligand>
</feature>
<feature type="binding site" evidence="1">
    <location>
        <position position="453"/>
    </location>
    <ligand>
        <name>Zn(2+)</name>
        <dbReference type="ChEBI" id="CHEBI:29105"/>
    </ligand>
</feature>
<feature type="binding site" evidence="1">
    <location>
        <position position="535"/>
    </location>
    <ligand>
        <name>[4Fe-4S] cluster</name>
        <dbReference type="ChEBI" id="CHEBI:49883"/>
        <note>4Fe-4S-S-AdoMet</note>
    </ligand>
</feature>
<feature type="binding site" evidence="1">
    <location>
        <position position="538"/>
    </location>
    <ligand>
        <name>[4Fe-4S] cluster</name>
        <dbReference type="ChEBI" id="CHEBI:49883"/>
        <note>4Fe-4S-S-AdoMet</note>
    </ligand>
</feature>
<feature type="binding site" evidence="1">
    <location>
        <position position="543"/>
    </location>
    <ligand>
        <name>[4Fe-4S] cluster</name>
        <dbReference type="ChEBI" id="CHEBI:49883"/>
        <note>4Fe-4S-S-AdoMet</note>
    </ligand>
</feature>
<name>THIC_CHLTE</name>
<comment type="function">
    <text evidence="1">Catalyzes the synthesis of the hydroxymethylpyrimidine phosphate (HMP-P) moiety of thiamine from aminoimidazole ribotide (AIR) in a radical S-adenosyl-L-methionine (SAM)-dependent reaction.</text>
</comment>
<comment type="catalytic activity">
    <reaction evidence="1">
        <text>5-amino-1-(5-phospho-beta-D-ribosyl)imidazole + S-adenosyl-L-methionine = 4-amino-2-methyl-5-(phosphooxymethyl)pyrimidine + CO + 5'-deoxyadenosine + formate + L-methionine + 3 H(+)</text>
        <dbReference type="Rhea" id="RHEA:24840"/>
        <dbReference type="ChEBI" id="CHEBI:15378"/>
        <dbReference type="ChEBI" id="CHEBI:15740"/>
        <dbReference type="ChEBI" id="CHEBI:17245"/>
        <dbReference type="ChEBI" id="CHEBI:17319"/>
        <dbReference type="ChEBI" id="CHEBI:57844"/>
        <dbReference type="ChEBI" id="CHEBI:58354"/>
        <dbReference type="ChEBI" id="CHEBI:59789"/>
        <dbReference type="ChEBI" id="CHEBI:137981"/>
        <dbReference type="EC" id="4.1.99.17"/>
    </reaction>
</comment>
<comment type="cofactor">
    <cofactor evidence="1">
        <name>[4Fe-4S] cluster</name>
        <dbReference type="ChEBI" id="CHEBI:49883"/>
    </cofactor>
    <text evidence="1">Binds 1 [4Fe-4S] cluster per subunit. The cluster is coordinated with 3 cysteines and an exchangeable S-adenosyl-L-methionine.</text>
</comment>
<comment type="pathway">
    <text evidence="1">Cofactor biosynthesis; thiamine diphosphate biosynthesis.</text>
</comment>
<comment type="similarity">
    <text evidence="1">Belongs to the ThiC family.</text>
</comment>
<reference key="1">
    <citation type="journal article" date="2002" name="Proc. Natl. Acad. Sci. U.S.A.">
        <title>The complete genome sequence of Chlorobium tepidum TLS, a photosynthetic, anaerobic, green-sulfur bacterium.</title>
        <authorList>
            <person name="Eisen J.A."/>
            <person name="Nelson K.E."/>
            <person name="Paulsen I.T."/>
            <person name="Heidelberg J.F."/>
            <person name="Wu M."/>
            <person name="Dodson R.J."/>
            <person name="DeBoy R.T."/>
            <person name="Gwinn M.L."/>
            <person name="Nelson W.C."/>
            <person name="Haft D.H."/>
            <person name="Hickey E.K."/>
            <person name="Peterson J.D."/>
            <person name="Durkin A.S."/>
            <person name="Kolonay J.F."/>
            <person name="Yang F."/>
            <person name="Holt I.E."/>
            <person name="Umayam L.A."/>
            <person name="Mason T.M."/>
            <person name="Brenner M."/>
            <person name="Shea T.P."/>
            <person name="Parksey D.S."/>
            <person name="Nierman W.C."/>
            <person name="Feldblyum T.V."/>
            <person name="Hansen C.L."/>
            <person name="Craven M.B."/>
            <person name="Radune D."/>
            <person name="Vamathevan J.J."/>
            <person name="Khouri H.M."/>
            <person name="White O."/>
            <person name="Gruber T.M."/>
            <person name="Ketchum K.A."/>
            <person name="Venter J.C."/>
            <person name="Tettelin H."/>
            <person name="Bryant D.A."/>
            <person name="Fraser C.M."/>
        </authorList>
    </citation>
    <scope>NUCLEOTIDE SEQUENCE [LARGE SCALE GENOMIC DNA]</scope>
    <source>
        <strain>ATCC 49652 / DSM 12025 / NBRC 103806 / TLS</strain>
    </source>
</reference>
<protein>
    <recommendedName>
        <fullName evidence="1">Phosphomethylpyrimidine synthase</fullName>
        <ecNumber evidence="1">4.1.99.17</ecNumber>
    </recommendedName>
    <alternativeName>
        <fullName evidence="1">Hydroxymethylpyrimidine phosphate synthase</fullName>
        <shortName evidence="1">HMP-P synthase</shortName>
        <shortName evidence="1">HMP-phosphate synthase</shortName>
        <shortName evidence="1">HMPP synthase</shortName>
    </alternativeName>
    <alternativeName>
        <fullName evidence="1">Thiamine biosynthesis protein ThiC</fullName>
    </alternativeName>
</protein>
<proteinExistence type="inferred from homology"/>
<gene>
    <name evidence="1" type="primary">thiC</name>
    <name type="ordered locus">CT1442</name>
</gene>
<evidence type="ECO:0000255" key="1">
    <source>
        <dbReference type="HAMAP-Rule" id="MF_00089"/>
    </source>
</evidence>
<accession>Q8KCH9</accession>
<keyword id="KW-0004">4Fe-4S</keyword>
<keyword id="KW-0408">Iron</keyword>
<keyword id="KW-0411">Iron-sulfur</keyword>
<keyword id="KW-0456">Lyase</keyword>
<keyword id="KW-0479">Metal-binding</keyword>
<keyword id="KW-1185">Reference proteome</keyword>
<keyword id="KW-0949">S-adenosyl-L-methionine</keyword>
<keyword id="KW-0784">Thiamine biosynthesis</keyword>
<keyword id="KW-0862">Zinc</keyword>
<dbReference type="EC" id="4.1.99.17" evidence="1"/>
<dbReference type="EMBL" id="AE006470">
    <property type="protein sequence ID" value="AAM72670.1"/>
    <property type="molecule type" value="Genomic_DNA"/>
</dbReference>
<dbReference type="RefSeq" id="NP_662328.1">
    <property type="nucleotide sequence ID" value="NC_002932.3"/>
</dbReference>
<dbReference type="RefSeq" id="WP_010933109.1">
    <property type="nucleotide sequence ID" value="NC_002932.3"/>
</dbReference>
<dbReference type="SMR" id="Q8KCH9"/>
<dbReference type="STRING" id="194439.CT1442"/>
<dbReference type="EnsemblBacteria" id="AAM72670">
    <property type="protein sequence ID" value="AAM72670"/>
    <property type="gene ID" value="CT1442"/>
</dbReference>
<dbReference type="KEGG" id="cte:CT1442"/>
<dbReference type="PATRIC" id="fig|194439.7.peg.1308"/>
<dbReference type="eggNOG" id="COG0422">
    <property type="taxonomic scope" value="Bacteria"/>
</dbReference>
<dbReference type="HOGENOM" id="CLU_013181_2_1_10"/>
<dbReference type="OrthoDB" id="9805897at2"/>
<dbReference type="UniPathway" id="UPA00060"/>
<dbReference type="Proteomes" id="UP000001007">
    <property type="component" value="Chromosome"/>
</dbReference>
<dbReference type="GO" id="GO:0005829">
    <property type="term" value="C:cytosol"/>
    <property type="evidence" value="ECO:0007669"/>
    <property type="project" value="TreeGrafter"/>
</dbReference>
<dbReference type="GO" id="GO:0051539">
    <property type="term" value="F:4 iron, 4 sulfur cluster binding"/>
    <property type="evidence" value="ECO:0007669"/>
    <property type="project" value="UniProtKB-KW"/>
</dbReference>
<dbReference type="GO" id="GO:0016830">
    <property type="term" value="F:carbon-carbon lyase activity"/>
    <property type="evidence" value="ECO:0007669"/>
    <property type="project" value="InterPro"/>
</dbReference>
<dbReference type="GO" id="GO:0008270">
    <property type="term" value="F:zinc ion binding"/>
    <property type="evidence" value="ECO:0007669"/>
    <property type="project" value="UniProtKB-UniRule"/>
</dbReference>
<dbReference type="GO" id="GO:0009228">
    <property type="term" value="P:thiamine biosynthetic process"/>
    <property type="evidence" value="ECO:0007669"/>
    <property type="project" value="UniProtKB-KW"/>
</dbReference>
<dbReference type="GO" id="GO:0009229">
    <property type="term" value="P:thiamine diphosphate biosynthetic process"/>
    <property type="evidence" value="ECO:0007669"/>
    <property type="project" value="UniProtKB-UniRule"/>
</dbReference>
<dbReference type="FunFam" id="3.20.20.540:FF:000001">
    <property type="entry name" value="Phosphomethylpyrimidine synthase"/>
    <property type="match status" value="1"/>
</dbReference>
<dbReference type="Gene3D" id="6.10.250.620">
    <property type="match status" value="1"/>
</dbReference>
<dbReference type="Gene3D" id="3.20.20.540">
    <property type="entry name" value="Radical SAM ThiC family, central domain"/>
    <property type="match status" value="1"/>
</dbReference>
<dbReference type="HAMAP" id="MF_00089">
    <property type="entry name" value="ThiC"/>
    <property type="match status" value="1"/>
</dbReference>
<dbReference type="InterPro" id="IPR037509">
    <property type="entry name" value="ThiC"/>
</dbReference>
<dbReference type="InterPro" id="IPR025747">
    <property type="entry name" value="ThiC-associated_dom"/>
</dbReference>
<dbReference type="InterPro" id="IPR038521">
    <property type="entry name" value="ThiC/Bza_core_dom"/>
</dbReference>
<dbReference type="InterPro" id="IPR002817">
    <property type="entry name" value="ThiC/BzaA/B"/>
</dbReference>
<dbReference type="NCBIfam" id="NF006763">
    <property type="entry name" value="PRK09284.1"/>
    <property type="match status" value="1"/>
</dbReference>
<dbReference type="NCBIfam" id="NF009895">
    <property type="entry name" value="PRK13352.1"/>
    <property type="match status" value="1"/>
</dbReference>
<dbReference type="NCBIfam" id="TIGR00190">
    <property type="entry name" value="thiC"/>
    <property type="match status" value="1"/>
</dbReference>
<dbReference type="PANTHER" id="PTHR30557:SF1">
    <property type="entry name" value="PHOSPHOMETHYLPYRIMIDINE SYNTHASE, CHLOROPLASTIC"/>
    <property type="match status" value="1"/>
</dbReference>
<dbReference type="PANTHER" id="PTHR30557">
    <property type="entry name" value="THIAMINE BIOSYNTHESIS PROTEIN THIC"/>
    <property type="match status" value="1"/>
</dbReference>
<dbReference type="Pfam" id="PF13667">
    <property type="entry name" value="ThiC-associated"/>
    <property type="match status" value="1"/>
</dbReference>
<dbReference type="Pfam" id="PF01964">
    <property type="entry name" value="ThiC_Rad_SAM"/>
    <property type="match status" value="1"/>
</dbReference>
<dbReference type="SFLD" id="SFLDF00407">
    <property type="entry name" value="phosphomethylpyrimidine_syntha"/>
    <property type="match status" value="1"/>
</dbReference>
<dbReference type="SFLD" id="SFLDG01114">
    <property type="entry name" value="phosphomethylpyrimidine_syntha"/>
    <property type="match status" value="1"/>
</dbReference>
<dbReference type="SFLD" id="SFLDS00113">
    <property type="entry name" value="Radical_SAM_Phosphomethylpyrim"/>
    <property type="match status" value="1"/>
</dbReference>
<organism>
    <name type="scientific">Chlorobaculum tepidum (strain ATCC 49652 / DSM 12025 / NBRC 103806 / TLS)</name>
    <name type="common">Chlorobium tepidum</name>
    <dbReference type="NCBI Taxonomy" id="194439"/>
    <lineage>
        <taxon>Bacteria</taxon>
        <taxon>Pseudomonadati</taxon>
        <taxon>Chlorobiota</taxon>
        <taxon>Chlorobiia</taxon>
        <taxon>Chlorobiales</taxon>
        <taxon>Chlorobiaceae</taxon>
        <taxon>Chlorobaculum</taxon>
    </lineage>
</organism>
<sequence length="556" mass="61332">MNQENASCPKKHFFGPASSRITVKGTIYPIEVGMRRVALTRSYECKGERFDAMPLYDTSGPFGDAEREHDVRKGLEPVRDRWGFDRGTVESVGGELSMTGRKPRVAKAGEAVTQMHFARKGIVTPEMEYVAIRENQALEAWIEKCGGKPVTPEMVRSEVARGRAIIPANINHPEIEPMIIGRNFRVKINANIGNSALGSSIDEEVEKAVWSCRWGADTVMDLSTGKNIHQTREWILRNSPVPIGTVPLYQALEKVGGKAEELSWEVYRDTLVEQAEQGVDYFTIHSGILAATLPDAEARQTGIVSRGGSIMARWCRAHKQENFLFTRFDDICDILRSYDVAISLGDALRPGSIGDANDAAQFGELKTLGELTLRAWKRDVQVMIEGPGHVPLHMIRENMEMQLKHCHEAPFYTLGPLVTDVAAGYDHVNSAIGGTLIASLGCSMLCYVTPKEHLGLPNRDDVREGVIVHRVAAHAADIAKGSATAWLRDELMSKARYAFAWEDQFSLALDPLKTRQIHAQNIAATGDTSATAKYCTMCGPDFCSMKRSQETTAAGL</sequence>